<proteinExistence type="evidence at protein level"/>
<gene>
    <name type="primary">Ccnl1</name>
    <name type="synonym">Ania6a</name>
</gene>
<organism>
    <name type="scientific">Rattus norvegicus</name>
    <name type="common">Rat</name>
    <dbReference type="NCBI Taxonomy" id="10116"/>
    <lineage>
        <taxon>Eukaryota</taxon>
        <taxon>Metazoa</taxon>
        <taxon>Chordata</taxon>
        <taxon>Craniata</taxon>
        <taxon>Vertebrata</taxon>
        <taxon>Euteleostomi</taxon>
        <taxon>Mammalia</taxon>
        <taxon>Eutheria</taxon>
        <taxon>Euarchontoglires</taxon>
        <taxon>Glires</taxon>
        <taxon>Rodentia</taxon>
        <taxon>Myomorpha</taxon>
        <taxon>Muroidea</taxon>
        <taxon>Muridae</taxon>
        <taxon>Murinae</taxon>
        <taxon>Rattus</taxon>
    </lineage>
</organism>
<dbReference type="EMBL" id="AF030091">
    <property type="protein sequence ID" value="AAD45558.1"/>
    <property type="molecule type" value="mRNA"/>
</dbReference>
<dbReference type="EMBL" id="BC085686">
    <property type="protein sequence ID" value="AAH85686.1"/>
    <property type="molecule type" value="mRNA"/>
</dbReference>
<dbReference type="RefSeq" id="NP_446114.1">
    <molecule id="Q9R1Q2-1"/>
    <property type="nucleotide sequence ID" value="NM_053662.3"/>
</dbReference>
<dbReference type="RefSeq" id="XP_003749343.1">
    <property type="nucleotide sequence ID" value="XM_003749295.4"/>
</dbReference>
<dbReference type="RefSeq" id="XP_063137209.1">
    <molecule id="Q9R1Q2-2"/>
    <property type="nucleotide sequence ID" value="XM_063281139.1"/>
</dbReference>
<dbReference type="RefSeq" id="XP_063137210.1">
    <molecule id="Q9R1Q2-2"/>
    <property type="nucleotide sequence ID" value="XM_063281140.1"/>
</dbReference>
<dbReference type="SMR" id="Q9R1Q2"/>
<dbReference type="FunCoup" id="Q9R1Q2">
    <property type="interactions" value="3970"/>
</dbReference>
<dbReference type="STRING" id="10116.ENSRNOP00000016016"/>
<dbReference type="GlyGen" id="Q9R1Q2">
    <property type="glycosylation" value="1 site"/>
</dbReference>
<dbReference type="iPTMnet" id="Q9R1Q2"/>
<dbReference type="PhosphoSitePlus" id="Q9R1Q2"/>
<dbReference type="jPOST" id="Q9R1Q2"/>
<dbReference type="PaxDb" id="10116-ENSRNOP00000016016"/>
<dbReference type="Ensembl" id="ENSRNOT00000016016.6">
    <molecule id="Q9R1Q2-1"/>
    <property type="protein sequence ID" value="ENSRNOP00000016016.2"/>
    <property type="gene ID" value="ENSRNOG00000011586.8"/>
</dbReference>
<dbReference type="GeneID" id="114121"/>
<dbReference type="KEGG" id="rno:114121"/>
<dbReference type="UCSC" id="RGD:620864">
    <molecule id="Q9R1Q2-1"/>
    <property type="organism name" value="rat"/>
</dbReference>
<dbReference type="AGR" id="RGD:620864"/>
<dbReference type="CTD" id="57018"/>
<dbReference type="RGD" id="620864">
    <property type="gene designation" value="Ccnl1"/>
</dbReference>
<dbReference type="eggNOG" id="KOG0835">
    <property type="taxonomic scope" value="Eukaryota"/>
</dbReference>
<dbReference type="GeneTree" id="ENSGT00940000159135"/>
<dbReference type="HOGENOM" id="CLU_022000_6_1_1"/>
<dbReference type="InParanoid" id="Q9R1Q2"/>
<dbReference type="OrthoDB" id="10264655at2759"/>
<dbReference type="PhylomeDB" id="Q9R1Q2"/>
<dbReference type="TreeFam" id="TF101011"/>
<dbReference type="PRO" id="PR:Q9R1Q2"/>
<dbReference type="Proteomes" id="UP000002494">
    <property type="component" value="Chromosome 2"/>
</dbReference>
<dbReference type="Bgee" id="ENSRNOG00000011586">
    <property type="expression patterns" value="Expressed in thymus and 20 other cell types or tissues"/>
</dbReference>
<dbReference type="ExpressionAtlas" id="Q9R1Q2">
    <property type="expression patterns" value="baseline and differential"/>
</dbReference>
<dbReference type="GO" id="GO:0000307">
    <property type="term" value="C:cyclin-dependent protein kinase holoenzyme complex"/>
    <property type="evidence" value="ECO:0000266"/>
    <property type="project" value="RGD"/>
</dbReference>
<dbReference type="GO" id="GO:0016607">
    <property type="term" value="C:nuclear speck"/>
    <property type="evidence" value="ECO:0000314"/>
    <property type="project" value="RGD"/>
</dbReference>
<dbReference type="GO" id="GO:0005634">
    <property type="term" value="C:nucleus"/>
    <property type="evidence" value="ECO:0000266"/>
    <property type="project" value="RGD"/>
</dbReference>
<dbReference type="GO" id="GO:0016538">
    <property type="term" value="F:cyclin-dependent protein serine/threonine kinase regulator activity"/>
    <property type="evidence" value="ECO:0000318"/>
    <property type="project" value="GO_Central"/>
</dbReference>
<dbReference type="GO" id="GO:0043484">
    <property type="term" value="P:regulation of RNA splicing"/>
    <property type="evidence" value="ECO:0000266"/>
    <property type="project" value="RGD"/>
</dbReference>
<dbReference type="GO" id="GO:0006357">
    <property type="term" value="P:regulation of transcription by RNA polymerase II"/>
    <property type="evidence" value="ECO:0007669"/>
    <property type="project" value="InterPro"/>
</dbReference>
<dbReference type="CDD" id="cd20592">
    <property type="entry name" value="CYCLIN_CCNL1_rpt2"/>
    <property type="match status" value="1"/>
</dbReference>
<dbReference type="FunFam" id="1.10.472.10:FF:000014">
    <property type="entry name" value="cyclin-L1 isoform X1"/>
    <property type="match status" value="1"/>
</dbReference>
<dbReference type="FunFam" id="1.10.472.10:FF:000016">
    <property type="entry name" value="cyclin-L1 isoform X1"/>
    <property type="match status" value="1"/>
</dbReference>
<dbReference type="Gene3D" id="1.10.472.10">
    <property type="entry name" value="Cyclin-like"/>
    <property type="match status" value="2"/>
</dbReference>
<dbReference type="InterPro" id="IPR013763">
    <property type="entry name" value="Cyclin-like_dom"/>
</dbReference>
<dbReference type="InterPro" id="IPR036915">
    <property type="entry name" value="Cyclin-like_sf"/>
</dbReference>
<dbReference type="InterPro" id="IPR043198">
    <property type="entry name" value="Cyclin/Ssn8"/>
</dbReference>
<dbReference type="InterPro" id="IPR004367">
    <property type="entry name" value="Cyclin_C-dom"/>
</dbReference>
<dbReference type="InterPro" id="IPR006671">
    <property type="entry name" value="Cyclin_N"/>
</dbReference>
<dbReference type="PANTHER" id="PTHR10026">
    <property type="entry name" value="CYCLIN"/>
    <property type="match status" value="1"/>
</dbReference>
<dbReference type="Pfam" id="PF02984">
    <property type="entry name" value="Cyclin_C"/>
    <property type="match status" value="1"/>
</dbReference>
<dbReference type="Pfam" id="PF00134">
    <property type="entry name" value="Cyclin_N"/>
    <property type="match status" value="1"/>
</dbReference>
<dbReference type="PIRSF" id="PIRSF036580">
    <property type="entry name" value="Cyclin_L"/>
    <property type="match status" value="1"/>
</dbReference>
<dbReference type="SMART" id="SM00385">
    <property type="entry name" value="CYCLIN"/>
    <property type="match status" value="2"/>
</dbReference>
<dbReference type="SMART" id="SM01332">
    <property type="entry name" value="Cyclin_C"/>
    <property type="match status" value="1"/>
</dbReference>
<dbReference type="SUPFAM" id="SSF47954">
    <property type="entry name" value="Cyclin-like"/>
    <property type="match status" value="2"/>
</dbReference>
<name>CCNL1_RAT</name>
<protein>
    <recommendedName>
        <fullName>Cyclin-L1</fullName>
        <shortName>Cyclin-L</shortName>
    </recommendedName>
    <alternativeName>
        <fullName>Cyclin Ania-6a</fullName>
    </alternativeName>
</protein>
<accession>Q9R1Q2</accession>
<accession>Q5U364</accession>
<feature type="chain" id="PRO_0000080482" description="Cyclin-L1">
    <location>
        <begin position="1"/>
        <end position="527"/>
    </location>
</feature>
<feature type="region of interest" description="Disordered" evidence="3">
    <location>
        <begin position="1"/>
        <end position="37"/>
    </location>
</feature>
<feature type="region of interest" description="Cyclin-like 1">
    <location>
        <begin position="89"/>
        <end position="191"/>
    </location>
</feature>
<feature type="region of interest" description="Cyclin-like 2">
    <location>
        <begin position="204"/>
        <end position="288"/>
    </location>
</feature>
<feature type="region of interest" description="Disordered" evidence="3">
    <location>
        <begin position="327"/>
        <end position="527"/>
    </location>
</feature>
<feature type="region of interest" description="RS">
    <location>
        <begin position="391"/>
        <end position="433"/>
    </location>
</feature>
<feature type="compositionally biased region" description="Basic and acidic residues" evidence="3">
    <location>
        <begin position="343"/>
        <end position="353"/>
    </location>
</feature>
<feature type="compositionally biased region" description="Basic and acidic residues" evidence="3">
    <location>
        <begin position="362"/>
        <end position="371"/>
    </location>
</feature>
<feature type="compositionally biased region" description="Basic residues" evidence="3">
    <location>
        <begin position="383"/>
        <end position="419"/>
    </location>
</feature>
<feature type="compositionally biased region" description="Basic residues" evidence="3">
    <location>
        <begin position="439"/>
        <end position="453"/>
    </location>
</feature>
<feature type="compositionally biased region" description="Basic residues" evidence="3">
    <location>
        <begin position="461"/>
        <end position="477"/>
    </location>
</feature>
<feature type="compositionally biased region" description="Basic residues" evidence="3">
    <location>
        <begin position="487"/>
        <end position="499"/>
    </location>
</feature>
<feature type="compositionally biased region" description="Basic and acidic residues" evidence="3">
    <location>
        <begin position="500"/>
        <end position="509"/>
    </location>
</feature>
<feature type="compositionally biased region" description="Basic residues" evidence="3">
    <location>
        <begin position="510"/>
        <end position="527"/>
    </location>
</feature>
<feature type="modified residue" description="Phosphothreonine" evidence="2">
    <location>
        <position position="326"/>
    </location>
</feature>
<feature type="modified residue" description="Phosphoserine" evidence="11">
    <location>
        <position position="336"/>
    </location>
</feature>
<feature type="modified residue" description="Phosphoserine" evidence="11">
    <location>
        <position position="339"/>
    </location>
</feature>
<feature type="modified residue" description="Phosphoserine" evidence="11">
    <location>
        <position position="353"/>
    </location>
</feature>
<feature type="modified residue" description="Phosphoserine" evidence="2">
    <location>
        <position position="356"/>
    </location>
</feature>
<feature type="modified residue" description="Phosphoserine" evidence="2">
    <location>
        <position position="375"/>
    </location>
</feature>
<feature type="modified residue" description="Phosphoserine" evidence="2">
    <location>
        <position position="446"/>
    </location>
</feature>
<feature type="cross-link" description="Glycyl lysine isopeptide (Lys-Gly) (interchain with G-Cter in SUMO2)" evidence="2">
    <location>
        <position position="340"/>
    </location>
</feature>
<feature type="cross-link" description="Glycyl lysine isopeptide (Lys-Gly) (interchain with G-Cter in SUMO2)" evidence="2">
    <location>
        <position position="348"/>
    </location>
</feature>
<feature type="cross-link" description="Glycyl lysine isopeptide (Lys-Gly) (interchain with G-Cter in SUMO2)" evidence="2">
    <location>
        <position position="363"/>
    </location>
</feature>
<feature type="splice variant" id="VSP_016128" description="In isoform 2." evidence="8 9">
    <original>RTPSPLILDQ</original>
    <variation>SDQLHLPKPG</variation>
    <location>
        <begin position="164"/>
        <end position="173"/>
    </location>
</feature>
<feature type="splice variant" id="VSP_016129" description="In isoform 2." evidence="8 9">
    <location>
        <begin position="174"/>
        <end position="527"/>
    </location>
</feature>
<reference key="1">
    <citation type="journal article" date="1998" name="J. Neurosci.">
        <title>A complex program of striatal gene expression induced by dopaminergic stimulation.</title>
        <authorList>
            <person name="Berke J.D."/>
            <person name="Paletzki R.F."/>
            <person name="Aronson G.J."/>
            <person name="Hyman S.E."/>
            <person name="Gerfen C.R."/>
        </authorList>
    </citation>
    <scope>NUCLEOTIDE SEQUENCE [MRNA] (ISOFORM 1)</scope>
    <scope>SUBCELLULAR LOCATION</scope>
    <scope>INDUCTION</scope>
</reference>
<reference key="2">
    <citation type="journal article" date="2001" name="Neuron">
        <title>Dopamine and glutamate induce distinct striatal splice forms of Ania-6, an RNA polymerase II-associated cyclin.</title>
        <authorList>
            <person name="Berke J.D."/>
            <person name="Sgambato V."/>
            <person name="Zhu P.-P."/>
            <person name="Lavoie B."/>
            <person name="Vincent M."/>
            <person name="Krause M."/>
            <person name="Hyman S.E."/>
        </authorList>
    </citation>
    <scope>NUCLEOTIDE SEQUENCE [MRNA] (ISOFORMS 1 AND 2)</scope>
    <scope>FUNCTION</scope>
    <scope>SUBCELLULAR LOCATION</scope>
    <scope>TISSUE SPECIFICITY</scope>
    <scope>INDUCTION</scope>
    <scope>INTERACTION WITH POLR2A; CDC2L AND SFRS2</scope>
</reference>
<reference key="3">
    <citation type="journal article" date="2004" name="Genome Res.">
        <title>The status, quality, and expansion of the NIH full-length cDNA project: the Mammalian Gene Collection (MGC).</title>
        <authorList>
            <consortium name="The MGC Project Team"/>
        </authorList>
    </citation>
    <scope>NUCLEOTIDE SEQUENCE [LARGE SCALE MRNA] (ISOFORM 2)</scope>
    <source>
        <tissue>Testis</tissue>
    </source>
</reference>
<reference key="4">
    <citation type="journal article" date="2003" name="J. Neurochem.">
        <title>Regulation of ania-6 splice variants by distinct signaling pathways in striatal neurons.</title>
        <authorList>
            <person name="Sgambato V."/>
            <person name="Minassian R."/>
            <person name="Nairn A.C."/>
            <person name="Hyman S.E."/>
        </authorList>
    </citation>
    <scope>INDUCTION</scope>
</reference>
<reference key="5">
    <citation type="journal article" date="2006" name="Mol. Cell. Biol.">
        <title>Identification and characterization of the CDK12/cyclin L1 complex involved in alternative splicing regulation.</title>
        <authorList>
            <person name="Chen H.-H."/>
            <person name="Wang Y.-C."/>
            <person name="Fann M.-J."/>
        </authorList>
    </citation>
    <scope>INTERACTION WITH CDK12</scope>
</reference>
<reference key="6">
    <citation type="journal article" date="2012" name="Nat. Commun.">
        <title>Quantitative maps of protein phosphorylation sites across 14 different rat organs and tissues.</title>
        <authorList>
            <person name="Lundby A."/>
            <person name="Secher A."/>
            <person name="Lage K."/>
            <person name="Nordsborg N.B."/>
            <person name="Dmytriyev A."/>
            <person name="Lundby C."/>
            <person name="Olsen J.V."/>
        </authorList>
    </citation>
    <scope>PHOSPHORYLATION [LARGE SCALE ANALYSIS] AT SER-336; SER-339 AND SER-353</scope>
    <scope>IDENTIFICATION BY MASS SPECTROMETRY [LARGE SCALE ANALYSIS]</scope>
</reference>
<comment type="function">
    <text evidence="2 4">Involved in pre-mRNA splicing (PubMed:11683997). Functions in association with cyclin-dependent kinases (CDKs). May play a role in the regulation of RNA polymerase II (pol II). Inhibited by the CDK-specific inhibitor CDKN1A/p21 (By similarity).</text>
</comment>
<comment type="subunit">
    <text evidence="2 4 6">Interacts with POLR2A via its hyperphosphorylated C-terminal domain (CTD). Interacts with CDK11A, CDK11B, CDK12 and CDK13. May form a ternary complex with CDK11B and casein kinase II (CKII). Interacts with pre-mRNA-splicing factors, including at least SRSF1, SRSF2 AND SRSF7/SLU7.</text>
</comment>
<comment type="subcellular location">
    <subcellularLocation>
        <location evidence="4 7">Nucleus speckle</location>
    </subcellularLocation>
    <subcellularLocation>
        <location evidence="2">Nucleus</location>
        <location evidence="2">Nucleoplasm</location>
    </subcellularLocation>
    <text evidence="4 7">Found in nuclear intrachromatin granules clusters (IGC), also called nuclear speckles, which are storage compartments for nuclear proteins involved in mRNA processing.</text>
</comment>
<comment type="alternative products">
    <event type="alternative splicing"/>
    <isoform>
        <id>Q9R1Q2-1</id>
        <name>1</name>
        <sequence type="displayed"/>
    </isoform>
    <isoform>
        <id>Q9R1Q2-2</id>
        <name>2</name>
        <sequence type="described" ref="VSP_016128 VSP_016129"/>
    </isoform>
    <text>Ccnl1 is an immediate-early gene with independently regulated isoforms.</text>
</comment>
<comment type="tissue specificity">
    <text evidence="4">Ubiquitous with higher level in liver; expressed in striatal neurons.</text>
</comment>
<comment type="induction">
    <text evidence="4 5 7">By anisomycin (activator of MAP kinase pathway) and by dopamine and cocaine in dopamine D1 receptor-expressing striatal neurons and by EGF/epidermal growth factor or NGF/nerve growth factor in PC12 pheochromocytoma cells. Isoform 1 also is specifically induced by cycloheximide, potassium chloride (KCl) and forskolin or brain neurotrophic factor (BDNF). Isoform 2 is induced by glutamate.</text>
</comment>
<comment type="domain">
    <text evidence="1">Contains a RS region (arginine-serine dipeptide repeat) within the C-terminal domain which is the hallmark of the SR family of splicing factors. This region probably plays a role in protein-protein interactions (By similarity).</text>
</comment>
<comment type="similarity">
    <text evidence="10">Belongs to the cyclin family. Cyclin L subfamily.</text>
</comment>
<evidence type="ECO:0000250" key="1"/>
<evidence type="ECO:0000250" key="2">
    <source>
        <dbReference type="UniProtKB" id="Q9UK58"/>
    </source>
</evidence>
<evidence type="ECO:0000256" key="3">
    <source>
        <dbReference type="SAM" id="MobiDB-lite"/>
    </source>
</evidence>
<evidence type="ECO:0000269" key="4">
    <source>
    </source>
</evidence>
<evidence type="ECO:0000269" key="5">
    <source>
    </source>
</evidence>
<evidence type="ECO:0000269" key="6">
    <source>
    </source>
</evidence>
<evidence type="ECO:0000269" key="7">
    <source>
    </source>
</evidence>
<evidence type="ECO:0000303" key="8">
    <source>
    </source>
</evidence>
<evidence type="ECO:0000303" key="9">
    <source>
    </source>
</evidence>
<evidence type="ECO:0000305" key="10"/>
<evidence type="ECO:0007744" key="11">
    <source>
    </source>
</evidence>
<keyword id="KW-0025">Alternative splicing</keyword>
<keyword id="KW-0195">Cyclin</keyword>
<keyword id="KW-1017">Isopeptide bond</keyword>
<keyword id="KW-0539">Nucleus</keyword>
<keyword id="KW-0597">Phosphoprotein</keyword>
<keyword id="KW-1185">Reference proteome</keyword>
<keyword id="KW-0677">Repeat</keyword>
<keyword id="KW-0804">Transcription</keyword>
<keyword id="KW-0805">Transcription regulation</keyword>
<keyword id="KW-0832">Ubl conjugation</keyword>
<sequence>MASGPHPTSTAAAASASSAAPSAGGSSSGTTTTTTTTTGGILIGDRLYSEVSLTIDHSVIPEERLSPTPSMQDGLDLPSETDLRILGCELIQAAGILLRLPQVAMATGQVLFHRFFYSKSFVKHSFEIVAMACINLASKIEEAPRRIRDVINVFHHLRQLRGKRTPSPLILDQNYINTKNQVIKAERRVLKELGFCVHVKHPHKIIVMYLQVLECERNQTLVQTAWNYMNDSLRTNVFVRFQPETIACACIYLAARALQIPLPTRPHWFLLFGTTEEEIQEICIETLRLYTRKKPNYELLEKEVEKRKVALQEAKLKAKGLNLDGTPALSTLGGFSPASKPSSPREVKAEEKSPVSINVKTVKKEPEDRQQASKSPYNGVRKDSKRSRNSRSASRSRSRTRSRSRSHTPRRHYNNRRSRSGTYSSRSRSRSRSHSESPRRHHNHGSPHLKAKHTREDLKSSNRHGHKRKKSRSRSQSKTRDHSDVTKKHRHERGHHRDRRERSRSFERSHKGKHHGGSRSGHGRHRR</sequence>